<evidence type="ECO:0000250" key="1"/>
<evidence type="ECO:0000255" key="2"/>
<evidence type="ECO:0000305" key="3"/>
<evidence type="ECO:0007829" key="4">
    <source>
        <dbReference type="PDB" id="2LOS"/>
    </source>
</evidence>
<name>TM14C_HUMAN</name>
<gene>
    <name type="primary">TMEM14C</name>
    <name type="synonym">C6orf53</name>
    <name type="ORF">HSPC194</name>
</gene>
<sequence>MQDTGSVVPLHWFGFGYAALVASGGIIGYVKAGSVPSLAAGLLFGSLAGLGAYQLSQDPRNVWVFLATSGTLAGIMGMRFYHSGKFMPAGLIAGASLLMVAKVGVSMFNRPH</sequence>
<reference key="1">
    <citation type="journal article" date="2000" name="Genome Res.">
        <title>Cloning and functional analysis of cDNAs with open reading frames for 300 previously undefined genes expressed in CD34+ hematopoietic stem/progenitor cells.</title>
        <authorList>
            <person name="Zhang Q.-H."/>
            <person name="Ye M."/>
            <person name="Wu X.-Y."/>
            <person name="Ren S.-X."/>
            <person name="Zhao M."/>
            <person name="Zhao C.-J."/>
            <person name="Fu G."/>
            <person name="Shen Y."/>
            <person name="Fan H.-Y."/>
            <person name="Lu G."/>
            <person name="Zhong M."/>
            <person name="Xu X.-R."/>
            <person name="Han Z.-G."/>
            <person name="Zhang J.-W."/>
            <person name="Tao J."/>
            <person name="Huang Q.-H."/>
            <person name="Zhou J."/>
            <person name="Hu G.-X."/>
            <person name="Gu J."/>
            <person name="Chen S.-J."/>
            <person name="Chen Z."/>
        </authorList>
    </citation>
    <scope>NUCLEOTIDE SEQUENCE [LARGE SCALE MRNA]</scope>
    <source>
        <tissue>Umbilical cord blood</tissue>
    </source>
</reference>
<reference key="2">
    <citation type="journal article" date="2003" name="Nature">
        <title>The DNA sequence and analysis of human chromosome 6.</title>
        <authorList>
            <person name="Mungall A.J."/>
            <person name="Palmer S.A."/>
            <person name="Sims S.K."/>
            <person name="Edwards C.A."/>
            <person name="Ashurst J.L."/>
            <person name="Wilming L."/>
            <person name="Jones M.C."/>
            <person name="Horton R."/>
            <person name="Hunt S.E."/>
            <person name="Scott C.E."/>
            <person name="Gilbert J.G.R."/>
            <person name="Clamp M.E."/>
            <person name="Bethel G."/>
            <person name="Milne S."/>
            <person name="Ainscough R."/>
            <person name="Almeida J.P."/>
            <person name="Ambrose K.D."/>
            <person name="Andrews T.D."/>
            <person name="Ashwell R.I.S."/>
            <person name="Babbage A.K."/>
            <person name="Bagguley C.L."/>
            <person name="Bailey J."/>
            <person name="Banerjee R."/>
            <person name="Barker D.J."/>
            <person name="Barlow K.F."/>
            <person name="Bates K."/>
            <person name="Beare D.M."/>
            <person name="Beasley H."/>
            <person name="Beasley O."/>
            <person name="Bird C.P."/>
            <person name="Blakey S.E."/>
            <person name="Bray-Allen S."/>
            <person name="Brook J."/>
            <person name="Brown A.J."/>
            <person name="Brown J.Y."/>
            <person name="Burford D.C."/>
            <person name="Burrill W."/>
            <person name="Burton J."/>
            <person name="Carder C."/>
            <person name="Carter N.P."/>
            <person name="Chapman J.C."/>
            <person name="Clark S.Y."/>
            <person name="Clark G."/>
            <person name="Clee C.M."/>
            <person name="Clegg S."/>
            <person name="Cobley V."/>
            <person name="Collier R.E."/>
            <person name="Collins J.E."/>
            <person name="Colman L.K."/>
            <person name="Corby N.R."/>
            <person name="Coville G.J."/>
            <person name="Culley K.M."/>
            <person name="Dhami P."/>
            <person name="Davies J."/>
            <person name="Dunn M."/>
            <person name="Earthrowl M.E."/>
            <person name="Ellington A.E."/>
            <person name="Evans K.A."/>
            <person name="Faulkner L."/>
            <person name="Francis M.D."/>
            <person name="Frankish A."/>
            <person name="Frankland J."/>
            <person name="French L."/>
            <person name="Garner P."/>
            <person name="Garnett J."/>
            <person name="Ghori M.J."/>
            <person name="Gilby L.M."/>
            <person name="Gillson C.J."/>
            <person name="Glithero R.J."/>
            <person name="Grafham D.V."/>
            <person name="Grant M."/>
            <person name="Gribble S."/>
            <person name="Griffiths C."/>
            <person name="Griffiths M.N.D."/>
            <person name="Hall R."/>
            <person name="Halls K.S."/>
            <person name="Hammond S."/>
            <person name="Harley J.L."/>
            <person name="Hart E.A."/>
            <person name="Heath P.D."/>
            <person name="Heathcott R."/>
            <person name="Holmes S.J."/>
            <person name="Howden P.J."/>
            <person name="Howe K.L."/>
            <person name="Howell G.R."/>
            <person name="Huckle E."/>
            <person name="Humphray S.J."/>
            <person name="Humphries M.D."/>
            <person name="Hunt A.R."/>
            <person name="Johnson C.M."/>
            <person name="Joy A.A."/>
            <person name="Kay M."/>
            <person name="Keenan S.J."/>
            <person name="Kimberley A.M."/>
            <person name="King A."/>
            <person name="Laird G.K."/>
            <person name="Langford C."/>
            <person name="Lawlor S."/>
            <person name="Leongamornlert D.A."/>
            <person name="Leversha M."/>
            <person name="Lloyd C.R."/>
            <person name="Lloyd D.M."/>
            <person name="Loveland J.E."/>
            <person name="Lovell J."/>
            <person name="Martin S."/>
            <person name="Mashreghi-Mohammadi M."/>
            <person name="Maslen G.L."/>
            <person name="Matthews L."/>
            <person name="McCann O.T."/>
            <person name="McLaren S.J."/>
            <person name="McLay K."/>
            <person name="McMurray A."/>
            <person name="Moore M.J.F."/>
            <person name="Mullikin J.C."/>
            <person name="Niblett D."/>
            <person name="Nickerson T."/>
            <person name="Novik K.L."/>
            <person name="Oliver K."/>
            <person name="Overton-Larty E.K."/>
            <person name="Parker A."/>
            <person name="Patel R."/>
            <person name="Pearce A.V."/>
            <person name="Peck A.I."/>
            <person name="Phillimore B.J.C.T."/>
            <person name="Phillips S."/>
            <person name="Plumb R.W."/>
            <person name="Porter K.M."/>
            <person name="Ramsey Y."/>
            <person name="Ranby S.A."/>
            <person name="Rice C.M."/>
            <person name="Ross M.T."/>
            <person name="Searle S.M."/>
            <person name="Sehra H.K."/>
            <person name="Sheridan E."/>
            <person name="Skuce C.D."/>
            <person name="Smith S."/>
            <person name="Smith M."/>
            <person name="Spraggon L."/>
            <person name="Squares S.L."/>
            <person name="Steward C.A."/>
            <person name="Sycamore N."/>
            <person name="Tamlyn-Hall G."/>
            <person name="Tester J."/>
            <person name="Theaker A.J."/>
            <person name="Thomas D.W."/>
            <person name="Thorpe A."/>
            <person name="Tracey A."/>
            <person name="Tromans A."/>
            <person name="Tubby B."/>
            <person name="Wall M."/>
            <person name="Wallis J.M."/>
            <person name="West A.P."/>
            <person name="White S.S."/>
            <person name="Whitehead S.L."/>
            <person name="Whittaker H."/>
            <person name="Wild A."/>
            <person name="Willey D.J."/>
            <person name="Wilmer T.E."/>
            <person name="Wood J.M."/>
            <person name="Wray P.W."/>
            <person name="Wyatt J.C."/>
            <person name="Young L."/>
            <person name="Younger R.M."/>
            <person name="Bentley D.R."/>
            <person name="Coulson A."/>
            <person name="Durbin R.M."/>
            <person name="Hubbard T."/>
            <person name="Sulston J.E."/>
            <person name="Dunham I."/>
            <person name="Rogers J."/>
            <person name="Beck S."/>
        </authorList>
    </citation>
    <scope>NUCLEOTIDE SEQUENCE [LARGE SCALE GENOMIC DNA]</scope>
</reference>
<reference key="3">
    <citation type="submission" date="2005-07" db="EMBL/GenBank/DDBJ databases">
        <authorList>
            <person name="Mural R.J."/>
            <person name="Istrail S."/>
            <person name="Sutton G.G."/>
            <person name="Florea L."/>
            <person name="Halpern A.L."/>
            <person name="Mobarry C.M."/>
            <person name="Lippert R."/>
            <person name="Walenz B."/>
            <person name="Shatkay H."/>
            <person name="Dew I."/>
            <person name="Miller J.R."/>
            <person name="Flanigan M.J."/>
            <person name="Edwards N.J."/>
            <person name="Bolanos R."/>
            <person name="Fasulo D."/>
            <person name="Halldorsson B.V."/>
            <person name="Hannenhalli S."/>
            <person name="Turner R."/>
            <person name="Yooseph S."/>
            <person name="Lu F."/>
            <person name="Nusskern D.R."/>
            <person name="Shue B.C."/>
            <person name="Zheng X.H."/>
            <person name="Zhong F."/>
            <person name="Delcher A.L."/>
            <person name="Huson D.H."/>
            <person name="Kravitz S.A."/>
            <person name="Mouchard L."/>
            <person name="Reinert K."/>
            <person name="Remington K.A."/>
            <person name="Clark A.G."/>
            <person name="Waterman M.S."/>
            <person name="Eichler E.E."/>
            <person name="Adams M.D."/>
            <person name="Hunkapiller M.W."/>
            <person name="Myers E.W."/>
            <person name="Venter J.C."/>
        </authorList>
    </citation>
    <scope>NUCLEOTIDE SEQUENCE [LARGE SCALE GENOMIC DNA]</scope>
</reference>
<reference key="4">
    <citation type="journal article" date="2004" name="Genome Res.">
        <title>The status, quality, and expansion of the NIH full-length cDNA project: the Mammalian Gene Collection (MGC).</title>
        <authorList>
            <consortium name="The MGC Project Team"/>
        </authorList>
    </citation>
    <scope>NUCLEOTIDE SEQUENCE [LARGE SCALE MRNA]</scope>
    <source>
        <tissue>Placenta</tissue>
        <tissue>Skin</tissue>
    </source>
</reference>
<reference key="5">
    <citation type="journal article" date="2011" name="BMC Syst. Biol.">
        <title>Initial characterization of the human central proteome.</title>
        <authorList>
            <person name="Burkard T.R."/>
            <person name="Planyavsky M."/>
            <person name="Kaupe I."/>
            <person name="Breitwieser F.P."/>
            <person name="Buerckstuemmer T."/>
            <person name="Bennett K.L."/>
            <person name="Superti-Furga G."/>
            <person name="Colinge J."/>
        </authorList>
    </citation>
    <scope>IDENTIFICATION BY MASS SPECTROMETRY [LARGE SCALE ANALYSIS]</scope>
</reference>
<reference key="6">
    <citation type="journal article" date="2015" name="Proteomics">
        <title>N-terminome analysis of the human mitochondrial proteome.</title>
        <authorList>
            <person name="Vaca Jacome A.S."/>
            <person name="Rabilloud T."/>
            <person name="Schaeffer-Reiss C."/>
            <person name="Rompais M."/>
            <person name="Ayoub D."/>
            <person name="Lane L."/>
            <person name="Bairoch A."/>
            <person name="Van Dorsselaer A."/>
            <person name="Carapito C."/>
        </authorList>
    </citation>
    <scope>IDENTIFICATION BY MASS SPECTROMETRY [LARGE SCALE ANALYSIS]</scope>
</reference>
<reference key="7">
    <citation type="journal article" date="2012" name="Nat. Methods">
        <title>Facile backbone structure determination of human membrane proteins by NMR spectroscopy.</title>
        <authorList>
            <person name="Klammt C."/>
            <person name="Maslennikov I."/>
            <person name="Bayrhuber M."/>
            <person name="Eichmann C."/>
            <person name="Vajpai N."/>
            <person name="Chiu E.J."/>
            <person name="Blain K.Y."/>
            <person name="Esquivies L."/>
            <person name="Kwon J.H."/>
            <person name="Balana B."/>
            <person name="Pieper U."/>
            <person name="Sali A."/>
            <person name="Slesinger P.A."/>
            <person name="Kwiatkowski W."/>
            <person name="Riek R."/>
            <person name="Choe S."/>
        </authorList>
    </citation>
    <scope>STRUCTURE BY NMR</scope>
</reference>
<protein>
    <recommendedName>
        <fullName>Transmembrane protein 14C</fullName>
    </recommendedName>
</protein>
<organism>
    <name type="scientific">Homo sapiens</name>
    <name type="common">Human</name>
    <dbReference type="NCBI Taxonomy" id="9606"/>
    <lineage>
        <taxon>Eukaryota</taxon>
        <taxon>Metazoa</taxon>
        <taxon>Chordata</taxon>
        <taxon>Craniata</taxon>
        <taxon>Vertebrata</taxon>
        <taxon>Euteleostomi</taxon>
        <taxon>Mammalia</taxon>
        <taxon>Eutheria</taxon>
        <taxon>Euarchontoglires</taxon>
        <taxon>Primates</taxon>
        <taxon>Haplorrhini</taxon>
        <taxon>Catarrhini</taxon>
        <taxon>Hominidae</taxon>
        <taxon>Homo</taxon>
    </lineage>
</organism>
<comment type="function">
    <text evidence="1">Required for normal heme biosynthesis.</text>
</comment>
<comment type="interaction">
    <interactant intactId="EBI-2339195">
        <id>Q9P0S9</id>
    </interactant>
    <interactant intactId="EBI-11343438">
        <id>Q3SXY8</id>
        <label>ARL13B</label>
    </interactant>
    <organismsDiffer>false</organismsDiffer>
    <experiments>3</experiments>
</comment>
<comment type="interaction">
    <interactant intactId="EBI-2339195">
        <id>Q9P0S9</id>
    </interactant>
    <interactant intactId="EBI-747430">
        <id>Q9BXK5</id>
        <label>BCL2L13</label>
    </interactant>
    <organismsDiffer>false</organismsDiffer>
    <experiments>3</experiments>
</comment>
<comment type="interaction">
    <interactant intactId="EBI-2339195">
        <id>Q9P0S9</id>
    </interactant>
    <interactant intactId="EBI-700794">
        <id>Q13323</id>
        <label>BIK</label>
    </interactant>
    <organismsDiffer>false</organismsDiffer>
    <experiments>3</experiments>
</comment>
<comment type="interaction">
    <interactant intactId="EBI-2339195">
        <id>Q9P0S9</id>
    </interactant>
    <interactant intactId="EBI-18400628">
        <id>O00501</id>
        <label>CLDN5</label>
    </interactant>
    <organismsDiffer>false</organismsDiffer>
    <experiments>3</experiments>
</comment>
<comment type="interaction">
    <interactant intactId="EBI-2339195">
        <id>Q9P0S9</id>
    </interactant>
    <interactant intactId="EBI-372265">
        <id>P21964</id>
        <label>COMT</label>
    </interactant>
    <organismsDiffer>false</organismsDiffer>
    <experiments>3</experiments>
</comment>
<comment type="interaction">
    <interactant intactId="EBI-2339195">
        <id>Q9P0S9</id>
    </interactant>
    <interactant intactId="EBI-724524">
        <id>O75208</id>
        <label>COQ9</label>
    </interactant>
    <organismsDiffer>false</organismsDiffer>
    <experiments>3</experiments>
</comment>
<comment type="interaction">
    <interactant intactId="EBI-2339195">
        <id>Q9P0S9</id>
    </interactant>
    <interactant intactId="EBI-6942903">
        <id>Q96BA8</id>
        <label>CREB3L1</label>
    </interactant>
    <organismsDiffer>false</organismsDiffer>
    <experiments>5</experiments>
</comment>
<comment type="interaction">
    <interactant intactId="EBI-2339195">
        <id>Q9P0S9</id>
    </interactant>
    <interactant intactId="EBI-1046040">
        <id>P00387</id>
        <label>CYB5R3</label>
    </interactant>
    <organismsDiffer>false</organismsDiffer>
    <experiments>3</experiments>
</comment>
<comment type="interaction">
    <interactant intactId="EBI-2339195">
        <id>Q9P0S9</id>
    </interactant>
    <interactant intactId="EBI-3915253">
        <id>Q15125</id>
        <label>EBP</label>
    </interactant>
    <organismsDiffer>false</organismsDiffer>
    <experiments>3</experiments>
</comment>
<comment type="interaction">
    <interactant intactId="EBI-2339195">
        <id>Q9P0S9</id>
    </interactant>
    <interactant intactId="EBI-10285373">
        <id>A1L3X0</id>
        <label>ELOVL7</label>
    </interactant>
    <organismsDiffer>false</organismsDiffer>
    <experiments>3</experiments>
</comment>
<comment type="interaction">
    <interactant intactId="EBI-2339195">
        <id>Q9P0S9</id>
    </interactant>
    <interactant intactId="EBI-18304435">
        <id>Q5JX71</id>
        <label>FAM209A</label>
    </interactant>
    <organismsDiffer>false</organismsDiffer>
    <experiments>3</experiments>
</comment>
<comment type="interaction">
    <interactant intactId="EBI-2339195">
        <id>Q9P0S9</id>
    </interactant>
    <interactant intactId="EBI-17565645">
        <id>P08034</id>
        <label>GJB1</label>
    </interactant>
    <organismsDiffer>false</organismsDiffer>
    <experiments>3</experiments>
</comment>
<comment type="interaction">
    <interactant intactId="EBI-2339195">
        <id>Q9P0S9</id>
    </interactant>
    <interactant intactId="EBI-3917143">
        <id>Q5T7V8</id>
        <label>GORAB</label>
    </interactant>
    <organismsDiffer>false</organismsDiffer>
    <experiments>3</experiments>
</comment>
<comment type="interaction">
    <interactant intactId="EBI-2339195">
        <id>Q9P0S9</id>
    </interactant>
    <interactant intactId="EBI-13345167">
        <id>Q8TDT2</id>
        <label>GPR152</label>
    </interactant>
    <organismsDiffer>false</organismsDiffer>
    <experiments>3</experiments>
</comment>
<comment type="interaction">
    <interactant intactId="EBI-2339195">
        <id>Q9P0S9</id>
    </interactant>
    <interactant intactId="EBI-18053395">
        <id>Q7Z5P4</id>
        <label>HSD17B13</label>
    </interactant>
    <organismsDiffer>false</organismsDiffer>
    <experiments>3</experiments>
</comment>
<comment type="interaction">
    <interactant intactId="EBI-2339195">
        <id>Q9P0S9</id>
    </interactant>
    <interactant intactId="EBI-749265">
        <id>Q8N6L0</id>
        <label>KASH5</label>
    </interactant>
    <organismsDiffer>false</organismsDiffer>
    <experiments>3</experiments>
</comment>
<comment type="interaction">
    <interactant intactId="EBI-2339195">
        <id>Q9P0S9</id>
    </interactant>
    <interactant intactId="EBI-14061946">
        <id>Q5T0T0</id>
        <label>MARCHF8</label>
    </interactant>
    <organismsDiffer>false</organismsDiffer>
    <experiments>3</experiments>
</comment>
<comment type="interaction">
    <interactant intactId="EBI-2339195">
        <id>Q9P0S9</id>
    </interactant>
    <interactant intactId="EBI-11956541">
        <id>Q9GZY8-5</id>
        <label>MFF</label>
    </interactant>
    <organismsDiffer>false</organismsDiffer>
    <experiments>3</experiments>
</comment>
<comment type="interaction">
    <interactant intactId="EBI-2339195">
        <id>Q9P0S9</id>
    </interactant>
    <interactant intactId="EBI-6163737">
        <id>Q8N4V1</id>
        <label>MMGT1</label>
    </interactant>
    <organismsDiffer>false</organismsDiffer>
    <experiments>3</experiments>
</comment>
<comment type="interaction">
    <interactant intactId="EBI-2339195">
        <id>Q9P0S9</id>
    </interactant>
    <interactant intactId="EBI-7825321">
        <id>Q96E29</id>
        <label>MTERF3</label>
    </interactant>
    <organismsDiffer>false</organismsDiffer>
    <experiments>3</experiments>
</comment>
<comment type="interaction">
    <interactant intactId="EBI-2339195">
        <id>Q9P0S9</id>
    </interactant>
    <interactant intactId="EBI-17263240">
        <id>P15941-11</id>
        <label>MUC1</label>
    </interactant>
    <organismsDiffer>false</organismsDiffer>
    <experiments>3</experiments>
</comment>
<comment type="interaction">
    <interactant intactId="EBI-2339195">
        <id>Q9P0S9</id>
    </interactant>
    <interactant intactId="EBI-10247000">
        <id>Q6IBW4-4</id>
        <label>NCAPH2</label>
    </interactant>
    <organismsDiffer>false</organismsDiffer>
    <experiments>3</experiments>
</comment>
<comment type="interaction">
    <interactant intactId="EBI-2339195">
        <id>Q9P0S9</id>
    </interactant>
    <interactant intactId="EBI-14061804">
        <id>Q68D85</id>
        <label>NCR3LG1</label>
    </interactant>
    <organismsDiffer>false</organismsDiffer>
    <experiments>3</experiments>
</comment>
<comment type="interaction">
    <interactant intactId="EBI-2339195">
        <id>Q9P0S9</id>
    </interactant>
    <interactant intactId="EBI-716063">
        <id>Q13113</id>
        <label>PDZK1IP1</label>
    </interactant>
    <organismsDiffer>false</organismsDiffer>
    <experiments>3</experiments>
</comment>
<comment type="interaction">
    <interactant intactId="EBI-2339195">
        <id>Q9P0S9</id>
    </interactant>
    <interactant intactId="EBI-725795">
        <id>O60664</id>
        <label>PLIN3</label>
    </interactant>
    <organismsDiffer>false</organismsDiffer>
    <experiments>3</experiments>
</comment>
<comment type="interaction">
    <interactant intactId="EBI-2339195">
        <id>Q9P0S9</id>
    </interactant>
    <interactant intactId="EBI-10204280">
        <id>A0A0S2Z4U3</id>
        <label>SDC3</label>
    </interactant>
    <organismsDiffer>false</organismsDiffer>
    <experiments>3</experiments>
</comment>
<comment type="interaction">
    <interactant intactId="EBI-2339195">
        <id>Q9P0S9</id>
    </interactant>
    <interactant intactId="EBI-18159983">
        <id>Q3KNW5</id>
        <label>SLC10A6</label>
    </interactant>
    <organismsDiffer>false</organismsDiffer>
    <experiments>3</experiments>
</comment>
<comment type="interaction">
    <interactant intactId="EBI-2339195">
        <id>Q9P0S9</id>
    </interactant>
    <interactant intactId="EBI-17280858">
        <id>Q8WWF3</id>
        <label>SSMEM1</label>
    </interactant>
    <organismsDiffer>false</organismsDiffer>
    <experiments>3</experiments>
</comment>
<comment type="interaction">
    <interactant intactId="EBI-2339195">
        <id>Q9P0S9</id>
    </interactant>
    <interactant intactId="EBI-712466">
        <id>Q16623</id>
        <label>STX1A</label>
    </interactant>
    <organismsDiffer>false</organismsDiffer>
    <experiments>3</experiments>
</comment>
<comment type="interaction">
    <interactant intactId="EBI-2339195">
        <id>Q9P0S9</id>
    </interactant>
    <interactant intactId="EBI-524909">
        <id>P21579</id>
        <label>SYT1</label>
    </interactant>
    <organismsDiffer>false</organismsDiffer>
    <experiments>3</experiments>
</comment>
<comment type="interaction">
    <interactant intactId="EBI-2339195">
        <id>Q9P0S9</id>
    </interactant>
    <interactant intactId="EBI-8638294">
        <id>Q9NUH8</id>
        <label>TMEM14B</label>
    </interactant>
    <organismsDiffer>false</organismsDiffer>
    <experiments>3</experiments>
</comment>
<comment type="interaction">
    <interactant intactId="EBI-2339195">
        <id>Q9P0S9</id>
    </interactant>
    <interactant intactId="EBI-11722971">
        <id>Q53FP2</id>
        <label>TMEM35A</label>
    </interactant>
    <organismsDiffer>false</organismsDiffer>
    <experiments>3</experiments>
</comment>
<comment type="interaction">
    <interactant intactId="EBI-2339195">
        <id>Q9P0S9</id>
    </interactant>
    <interactant intactId="EBI-18178701">
        <id>Q4KMG9</id>
        <label>TMEM52B</label>
    </interactant>
    <organismsDiffer>false</organismsDiffer>
    <experiments>3</experiments>
</comment>
<comment type="interaction">
    <interactant intactId="EBI-2339195">
        <id>Q9P0S9</id>
    </interactant>
    <interactant intactId="EBI-8649725">
        <id>Q9BSE2</id>
        <label>TMEM79</label>
    </interactant>
    <organismsDiffer>false</organismsDiffer>
    <experiments>3</experiments>
</comment>
<comment type="interaction">
    <interactant intactId="EBI-2339195">
        <id>Q9P0S9</id>
    </interactant>
    <interactant intactId="EBI-2548832">
        <id>Q8N661</id>
        <label>TMEM86B</label>
    </interactant>
    <organismsDiffer>false</organismsDiffer>
    <experiments>3</experiments>
</comment>
<comment type="interaction">
    <interactant intactId="EBI-2339195">
        <id>Q9P0S9</id>
    </interactant>
    <interactant intactId="EBI-6447886">
        <id>Q9Y320</id>
        <label>TMX2</label>
    </interactant>
    <organismsDiffer>false</organismsDiffer>
    <experiments>3</experiments>
</comment>
<comment type="interaction">
    <interactant intactId="EBI-2339195">
        <id>Q9P0S9</id>
    </interactant>
    <interactant intactId="EBI-744988">
        <id>Q9H7M9</id>
        <label>VSIR</label>
    </interactant>
    <organismsDiffer>false</organismsDiffer>
    <experiments>3</experiments>
</comment>
<comment type="interaction">
    <interactant intactId="EBI-2339195">
        <id>Q9P0S9</id>
    </interactant>
    <interactant intactId="EBI-12837904">
        <id>Q96MV8</id>
        <label>ZDHHC15</label>
    </interactant>
    <organismsDiffer>false</organismsDiffer>
    <experiments>3</experiments>
</comment>
<comment type="interaction">
    <interactant intactId="EBI-2339195">
        <id>Q9P0S9</id>
    </interactant>
    <interactant intactId="EBI-3892947">
        <id>Q5T4F4</id>
        <label>ZFYVE27</label>
    </interactant>
    <organismsDiffer>false</organismsDiffer>
    <experiments>3</experiments>
</comment>
<comment type="subcellular location">
    <subcellularLocation>
        <location evidence="1">Mitochondrion membrane</location>
        <topology evidence="1">Multi-pass membrane protein</topology>
    </subcellularLocation>
</comment>
<comment type="similarity">
    <text evidence="3">Belongs to the TMEM14 family.</text>
</comment>
<proteinExistence type="evidence at protein level"/>
<feature type="chain" id="PRO_0000221173" description="Transmembrane protein 14C">
    <location>
        <begin position="1"/>
        <end position="112"/>
    </location>
</feature>
<feature type="transmembrane region" description="Helical" evidence="2">
    <location>
        <begin position="7"/>
        <end position="27"/>
    </location>
</feature>
<feature type="transmembrane region" description="Helical" evidence="2">
    <location>
        <begin position="32"/>
        <end position="52"/>
    </location>
</feature>
<feature type="transmembrane region" description="Helical" evidence="2">
    <location>
        <begin position="62"/>
        <end position="82"/>
    </location>
</feature>
<feature type="transmembrane region" description="Helical" evidence="2">
    <location>
        <begin position="88"/>
        <end position="108"/>
    </location>
</feature>
<feature type="sequence variant" id="VAR_046947" description="In dbSNP:rs1045961.">
    <original>S</original>
    <variation>R</variation>
    <location>
        <position position="106"/>
    </location>
</feature>
<feature type="sequence variant" id="VAR_046948" description="In dbSNP:rs1045964.">
    <original>F</original>
    <variation>L</variation>
    <location>
        <position position="108"/>
    </location>
</feature>
<feature type="sequence variant" id="VAR_046949" description="In dbSNP:rs1045967.">
    <original>N</original>
    <variation>I</variation>
    <location>
        <position position="109"/>
    </location>
</feature>
<feature type="sequence variant" id="VAR_046950" description="In dbSNP:rs1045986.">
    <original>H</original>
    <variation>D</variation>
    <location>
        <position position="112"/>
    </location>
</feature>
<feature type="helix" evidence="4">
    <location>
        <begin position="10"/>
        <end position="29"/>
    </location>
</feature>
<feature type="helix" evidence="4">
    <location>
        <begin position="35"/>
        <end position="52"/>
    </location>
</feature>
<feature type="strand" evidence="4">
    <location>
        <begin position="54"/>
        <end position="57"/>
    </location>
</feature>
<feature type="helix" evidence="4">
    <location>
        <begin position="59"/>
        <end position="74"/>
    </location>
</feature>
<feature type="strand" evidence="4">
    <location>
        <begin position="76"/>
        <end position="78"/>
    </location>
</feature>
<feature type="strand" evidence="4">
    <location>
        <begin position="87"/>
        <end position="89"/>
    </location>
</feature>
<feature type="helix" evidence="4">
    <location>
        <begin position="91"/>
        <end position="104"/>
    </location>
</feature>
<feature type="strand" evidence="4">
    <location>
        <begin position="105"/>
        <end position="107"/>
    </location>
</feature>
<dbReference type="EMBL" id="AF151028">
    <property type="protein sequence ID" value="AAF36114.1"/>
    <property type="molecule type" value="mRNA"/>
</dbReference>
<dbReference type="EMBL" id="AL358777">
    <property type="status" value="NOT_ANNOTATED_CDS"/>
    <property type="molecule type" value="Genomic_DNA"/>
</dbReference>
<dbReference type="EMBL" id="CH471087">
    <property type="protein sequence ID" value="EAW55271.1"/>
    <property type="molecule type" value="Genomic_DNA"/>
</dbReference>
<dbReference type="EMBL" id="BC002496">
    <property type="protein sequence ID" value="AAH02496.1"/>
    <property type="molecule type" value="mRNA"/>
</dbReference>
<dbReference type="EMBL" id="BC010086">
    <property type="protein sequence ID" value="AAH10086.1"/>
    <property type="molecule type" value="mRNA"/>
</dbReference>
<dbReference type="CCDS" id="CCDS4514.1"/>
<dbReference type="RefSeq" id="NP_001158730.1">
    <property type="nucleotide sequence ID" value="NM_001165258.2"/>
</dbReference>
<dbReference type="RefSeq" id="NP_057546.1">
    <property type="nucleotide sequence ID" value="NM_016462.4"/>
</dbReference>
<dbReference type="PDB" id="2LOS">
    <property type="method" value="NMR"/>
    <property type="chains" value="A=1-112"/>
</dbReference>
<dbReference type="PDBsum" id="2LOS"/>
<dbReference type="BMRB" id="Q9P0S9"/>
<dbReference type="SMR" id="Q9P0S9"/>
<dbReference type="BioGRID" id="119585">
    <property type="interactions" value="66"/>
</dbReference>
<dbReference type="FunCoup" id="Q9P0S9">
    <property type="interactions" value="561"/>
</dbReference>
<dbReference type="IntAct" id="Q9P0S9">
    <property type="interactions" value="48"/>
</dbReference>
<dbReference type="MINT" id="Q9P0S9"/>
<dbReference type="STRING" id="9606.ENSP00000444561"/>
<dbReference type="TCDB" id="2.A.126.1.18">
    <property type="family name" value="the fatty acid exporter (fax) family"/>
</dbReference>
<dbReference type="GlyGen" id="Q9P0S9">
    <property type="glycosylation" value="1 site, 1 O-linked glycan (1 site)"/>
</dbReference>
<dbReference type="iPTMnet" id="Q9P0S9"/>
<dbReference type="PhosphoSitePlus" id="Q9P0S9"/>
<dbReference type="SwissPalm" id="Q9P0S9"/>
<dbReference type="BioMuta" id="TMEM14C"/>
<dbReference type="DMDM" id="27734405"/>
<dbReference type="jPOST" id="Q9P0S9"/>
<dbReference type="MassIVE" id="Q9P0S9"/>
<dbReference type="PaxDb" id="9606-ENSP00000444561"/>
<dbReference type="PeptideAtlas" id="Q9P0S9"/>
<dbReference type="ProteomicsDB" id="83594"/>
<dbReference type="Pumba" id="Q9P0S9"/>
<dbReference type="TopDownProteomics" id="Q9P0S9"/>
<dbReference type="DNASU" id="51522"/>
<dbReference type="Ensembl" id="ENST00000229563.6">
    <property type="protein sequence ID" value="ENSP00000229563.5"/>
    <property type="gene ID" value="ENSG00000111843.14"/>
</dbReference>
<dbReference type="Ensembl" id="ENST00000541412.5">
    <property type="protein sequence ID" value="ENSP00000444561.1"/>
    <property type="gene ID" value="ENSG00000111843.14"/>
</dbReference>
<dbReference type="Ensembl" id="ENST00000642513.1">
    <property type="protein sequence ID" value="ENSP00000495127.1"/>
    <property type="gene ID" value="ENSG00000284936.2"/>
</dbReference>
<dbReference type="Ensembl" id="ENST00000643226.2">
    <property type="protein sequence ID" value="ENSP00000495742.1"/>
    <property type="gene ID" value="ENSG00000284936.2"/>
</dbReference>
<dbReference type="GeneID" id="51522"/>
<dbReference type="KEGG" id="hsa:51522"/>
<dbReference type="MANE-Select" id="ENST00000229563.6">
    <property type="protein sequence ID" value="ENSP00000229563.5"/>
    <property type="RefSeq nucleotide sequence ID" value="NM_016462.4"/>
    <property type="RefSeq protein sequence ID" value="NP_057546.1"/>
</dbReference>
<dbReference type="UCSC" id="uc003mzh.4">
    <property type="organism name" value="human"/>
</dbReference>
<dbReference type="AGR" id="HGNC:20952"/>
<dbReference type="CTD" id="51522"/>
<dbReference type="DisGeNET" id="51522"/>
<dbReference type="GeneCards" id="TMEM14C"/>
<dbReference type="HGNC" id="HGNC:20952">
    <property type="gene designation" value="TMEM14C"/>
</dbReference>
<dbReference type="HPA" id="ENSG00000111843">
    <property type="expression patterns" value="Low tissue specificity"/>
</dbReference>
<dbReference type="MIM" id="615318">
    <property type="type" value="gene"/>
</dbReference>
<dbReference type="neXtProt" id="NX_Q9P0S9"/>
<dbReference type="OpenTargets" id="ENSG00000111843"/>
<dbReference type="PharmGKB" id="PA134874746"/>
<dbReference type="VEuPathDB" id="HostDB:ENSG00000111843"/>
<dbReference type="eggNOG" id="KOG4267">
    <property type="taxonomic scope" value="Eukaryota"/>
</dbReference>
<dbReference type="GeneTree" id="ENSGT00940000154772"/>
<dbReference type="HOGENOM" id="CLU_096652_4_0_1"/>
<dbReference type="InParanoid" id="Q9P0S9"/>
<dbReference type="OMA" id="CSYNEYK"/>
<dbReference type="OrthoDB" id="5620at2759"/>
<dbReference type="PAN-GO" id="Q9P0S9">
    <property type="GO annotations" value="2 GO annotations based on evolutionary models"/>
</dbReference>
<dbReference type="PhylomeDB" id="Q9P0S9"/>
<dbReference type="TreeFam" id="TF323345"/>
<dbReference type="PathwayCommons" id="Q9P0S9"/>
<dbReference type="SignaLink" id="Q9P0S9"/>
<dbReference type="BioGRID-ORCS" id="51522">
    <property type="hits" value="9 hits in 1093 CRISPR screens"/>
</dbReference>
<dbReference type="ChiTaRS" id="TMEM14C">
    <property type="organism name" value="human"/>
</dbReference>
<dbReference type="EvolutionaryTrace" id="Q9P0S9"/>
<dbReference type="GenomeRNAi" id="51522"/>
<dbReference type="Pharos" id="Q9P0S9">
    <property type="development level" value="Tdark"/>
</dbReference>
<dbReference type="PRO" id="PR:Q9P0S9"/>
<dbReference type="Proteomes" id="UP000005640">
    <property type="component" value="Chromosome 6"/>
</dbReference>
<dbReference type="RNAct" id="Q9P0S9">
    <property type="molecule type" value="protein"/>
</dbReference>
<dbReference type="Bgee" id="ENSG00000111843">
    <property type="expression patterns" value="Expressed in primordial germ cell in gonad and 99 other cell types or tissues"/>
</dbReference>
<dbReference type="ExpressionAtlas" id="Q9P0S9">
    <property type="expression patterns" value="baseline and differential"/>
</dbReference>
<dbReference type="GO" id="GO:0005743">
    <property type="term" value="C:mitochondrial inner membrane"/>
    <property type="evidence" value="ECO:0007669"/>
    <property type="project" value="Ensembl"/>
</dbReference>
<dbReference type="GO" id="GO:0031966">
    <property type="term" value="C:mitochondrial membrane"/>
    <property type="evidence" value="ECO:0000318"/>
    <property type="project" value="GO_Central"/>
</dbReference>
<dbReference type="GO" id="GO:0005739">
    <property type="term" value="C:mitochondrion"/>
    <property type="evidence" value="ECO:0006056"/>
    <property type="project" value="FlyBase"/>
</dbReference>
<dbReference type="GO" id="GO:0030218">
    <property type="term" value="P:erythrocyte differentiation"/>
    <property type="evidence" value="ECO:0007669"/>
    <property type="project" value="Ensembl"/>
</dbReference>
<dbReference type="GO" id="GO:0006783">
    <property type="term" value="P:heme biosynthetic process"/>
    <property type="evidence" value="ECO:0007669"/>
    <property type="project" value="UniProtKB-KW"/>
</dbReference>
<dbReference type="GO" id="GO:0006839">
    <property type="term" value="P:mitochondrial transport"/>
    <property type="evidence" value="ECO:0007669"/>
    <property type="project" value="Ensembl"/>
</dbReference>
<dbReference type="GO" id="GO:0070453">
    <property type="term" value="P:regulation of heme biosynthetic process"/>
    <property type="evidence" value="ECO:0000318"/>
    <property type="project" value="GO_Central"/>
</dbReference>
<dbReference type="FunFam" id="1.10.10.1740:FF:000002">
    <property type="entry name" value="Transmembrane protein 14C"/>
    <property type="match status" value="1"/>
</dbReference>
<dbReference type="Gene3D" id="1.10.10.1740">
    <property type="entry name" value="Transmembrane protein 14-like"/>
    <property type="match status" value="1"/>
</dbReference>
<dbReference type="InterPro" id="IPR005349">
    <property type="entry name" value="TMEM14"/>
</dbReference>
<dbReference type="InterPro" id="IPR044890">
    <property type="entry name" value="TMEM14_sf"/>
</dbReference>
<dbReference type="PANTHER" id="PTHR12668">
    <property type="entry name" value="TRANSMEMBRANE PROTEIN 14, 15"/>
    <property type="match status" value="1"/>
</dbReference>
<dbReference type="PANTHER" id="PTHR12668:SF4">
    <property type="entry name" value="TRANSMEMBRANE PROTEIN 14C-RELATED"/>
    <property type="match status" value="1"/>
</dbReference>
<dbReference type="Pfam" id="PF03647">
    <property type="entry name" value="Tmemb_14"/>
    <property type="match status" value="1"/>
</dbReference>
<accession>Q9P0S9</accession>
<accession>Q5T4I6</accession>
<keyword id="KW-0002">3D-structure</keyword>
<keyword id="KW-0350">Heme biosynthesis</keyword>
<keyword id="KW-0472">Membrane</keyword>
<keyword id="KW-0496">Mitochondrion</keyword>
<keyword id="KW-1267">Proteomics identification</keyword>
<keyword id="KW-1185">Reference proteome</keyword>
<keyword id="KW-0812">Transmembrane</keyword>
<keyword id="KW-1133">Transmembrane helix</keyword>